<reference key="1">
    <citation type="journal article" date="2000" name="J. Biol. Chem.">
        <title>A novel RalGEF-like protein, RGL3, as a candidate effector for rit and Ras.</title>
        <authorList>
            <person name="Shao H."/>
            <person name="Andres D.A."/>
        </authorList>
    </citation>
    <scope>NUCLEOTIDE SEQUENCE [MRNA] (ISOFORM 1)</scope>
    <scope>FUNCTION</scope>
    <scope>INTERACTION WITH RIT1 AND HRAS</scope>
    <scope>DOMAIN</scope>
    <scope>TISSUE SPECIFICITY</scope>
</reference>
<reference key="2">
    <citation type="journal article" date="2001" name="Oncogene">
        <title>A novel potential effector of M-Ras and p21 Ras negatively regulates p21 Ras-mediated gene induction and cell growth.</title>
        <authorList>
            <person name="Ehrhardt G.R."/>
            <person name="Korherr C."/>
            <person name="Wieler J.S."/>
            <person name="Knaus M."/>
            <person name="Schrader J.W."/>
        </authorList>
    </citation>
    <scope>NUCLEOTIDE SEQUENCE [MRNA] (ISOFORM 1)</scope>
    <scope>FUNCTION</scope>
    <scope>INTERACTION WITH HRAS AND MRAS</scope>
    <scope>TISSUE SPECIFICITY</scope>
</reference>
<reference key="3">
    <citation type="journal article" date="2005" name="Science">
        <title>The transcriptional landscape of the mammalian genome.</title>
        <authorList>
            <person name="Carninci P."/>
            <person name="Kasukawa T."/>
            <person name="Katayama S."/>
            <person name="Gough J."/>
            <person name="Frith M.C."/>
            <person name="Maeda N."/>
            <person name="Oyama R."/>
            <person name="Ravasi T."/>
            <person name="Lenhard B."/>
            <person name="Wells C."/>
            <person name="Kodzius R."/>
            <person name="Shimokawa K."/>
            <person name="Bajic V.B."/>
            <person name="Brenner S.E."/>
            <person name="Batalov S."/>
            <person name="Forrest A.R."/>
            <person name="Zavolan M."/>
            <person name="Davis M.J."/>
            <person name="Wilming L.G."/>
            <person name="Aidinis V."/>
            <person name="Allen J.E."/>
            <person name="Ambesi-Impiombato A."/>
            <person name="Apweiler R."/>
            <person name="Aturaliya R.N."/>
            <person name="Bailey T.L."/>
            <person name="Bansal M."/>
            <person name="Baxter L."/>
            <person name="Beisel K.W."/>
            <person name="Bersano T."/>
            <person name="Bono H."/>
            <person name="Chalk A.M."/>
            <person name="Chiu K.P."/>
            <person name="Choudhary V."/>
            <person name="Christoffels A."/>
            <person name="Clutterbuck D.R."/>
            <person name="Crowe M.L."/>
            <person name="Dalla E."/>
            <person name="Dalrymple B.P."/>
            <person name="de Bono B."/>
            <person name="Della Gatta G."/>
            <person name="di Bernardo D."/>
            <person name="Down T."/>
            <person name="Engstrom P."/>
            <person name="Fagiolini M."/>
            <person name="Faulkner G."/>
            <person name="Fletcher C.F."/>
            <person name="Fukushima T."/>
            <person name="Furuno M."/>
            <person name="Futaki S."/>
            <person name="Gariboldi M."/>
            <person name="Georgii-Hemming P."/>
            <person name="Gingeras T.R."/>
            <person name="Gojobori T."/>
            <person name="Green R.E."/>
            <person name="Gustincich S."/>
            <person name="Harbers M."/>
            <person name="Hayashi Y."/>
            <person name="Hensch T.K."/>
            <person name="Hirokawa N."/>
            <person name="Hill D."/>
            <person name="Huminiecki L."/>
            <person name="Iacono M."/>
            <person name="Ikeo K."/>
            <person name="Iwama A."/>
            <person name="Ishikawa T."/>
            <person name="Jakt M."/>
            <person name="Kanapin A."/>
            <person name="Katoh M."/>
            <person name="Kawasawa Y."/>
            <person name="Kelso J."/>
            <person name="Kitamura H."/>
            <person name="Kitano H."/>
            <person name="Kollias G."/>
            <person name="Krishnan S.P."/>
            <person name="Kruger A."/>
            <person name="Kummerfeld S.K."/>
            <person name="Kurochkin I.V."/>
            <person name="Lareau L.F."/>
            <person name="Lazarevic D."/>
            <person name="Lipovich L."/>
            <person name="Liu J."/>
            <person name="Liuni S."/>
            <person name="McWilliam S."/>
            <person name="Madan Babu M."/>
            <person name="Madera M."/>
            <person name="Marchionni L."/>
            <person name="Matsuda H."/>
            <person name="Matsuzawa S."/>
            <person name="Miki H."/>
            <person name="Mignone F."/>
            <person name="Miyake S."/>
            <person name="Morris K."/>
            <person name="Mottagui-Tabar S."/>
            <person name="Mulder N."/>
            <person name="Nakano N."/>
            <person name="Nakauchi H."/>
            <person name="Ng P."/>
            <person name="Nilsson R."/>
            <person name="Nishiguchi S."/>
            <person name="Nishikawa S."/>
            <person name="Nori F."/>
            <person name="Ohara O."/>
            <person name="Okazaki Y."/>
            <person name="Orlando V."/>
            <person name="Pang K.C."/>
            <person name="Pavan W.J."/>
            <person name="Pavesi G."/>
            <person name="Pesole G."/>
            <person name="Petrovsky N."/>
            <person name="Piazza S."/>
            <person name="Reed J."/>
            <person name="Reid J.F."/>
            <person name="Ring B.Z."/>
            <person name="Ringwald M."/>
            <person name="Rost B."/>
            <person name="Ruan Y."/>
            <person name="Salzberg S.L."/>
            <person name="Sandelin A."/>
            <person name="Schneider C."/>
            <person name="Schoenbach C."/>
            <person name="Sekiguchi K."/>
            <person name="Semple C.A."/>
            <person name="Seno S."/>
            <person name="Sessa L."/>
            <person name="Sheng Y."/>
            <person name="Shibata Y."/>
            <person name="Shimada H."/>
            <person name="Shimada K."/>
            <person name="Silva D."/>
            <person name="Sinclair B."/>
            <person name="Sperling S."/>
            <person name="Stupka E."/>
            <person name="Sugiura K."/>
            <person name="Sultana R."/>
            <person name="Takenaka Y."/>
            <person name="Taki K."/>
            <person name="Tammoja K."/>
            <person name="Tan S.L."/>
            <person name="Tang S."/>
            <person name="Taylor M.S."/>
            <person name="Tegner J."/>
            <person name="Teichmann S.A."/>
            <person name="Ueda H.R."/>
            <person name="van Nimwegen E."/>
            <person name="Verardo R."/>
            <person name="Wei C.L."/>
            <person name="Yagi K."/>
            <person name="Yamanishi H."/>
            <person name="Zabarovsky E."/>
            <person name="Zhu S."/>
            <person name="Zimmer A."/>
            <person name="Hide W."/>
            <person name="Bult C."/>
            <person name="Grimmond S.M."/>
            <person name="Teasdale R.D."/>
            <person name="Liu E.T."/>
            <person name="Brusic V."/>
            <person name="Quackenbush J."/>
            <person name="Wahlestedt C."/>
            <person name="Mattick J.S."/>
            <person name="Hume D.A."/>
            <person name="Kai C."/>
            <person name="Sasaki D."/>
            <person name="Tomaru Y."/>
            <person name="Fukuda S."/>
            <person name="Kanamori-Katayama M."/>
            <person name="Suzuki M."/>
            <person name="Aoki J."/>
            <person name="Arakawa T."/>
            <person name="Iida J."/>
            <person name="Imamura K."/>
            <person name="Itoh M."/>
            <person name="Kato T."/>
            <person name="Kawaji H."/>
            <person name="Kawagashira N."/>
            <person name="Kawashima T."/>
            <person name="Kojima M."/>
            <person name="Kondo S."/>
            <person name="Konno H."/>
            <person name="Nakano K."/>
            <person name="Ninomiya N."/>
            <person name="Nishio T."/>
            <person name="Okada M."/>
            <person name="Plessy C."/>
            <person name="Shibata K."/>
            <person name="Shiraki T."/>
            <person name="Suzuki S."/>
            <person name="Tagami M."/>
            <person name="Waki K."/>
            <person name="Watahiki A."/>
            <person name="Okamura-Oho Y."/>
            <person name="Suzuki H."/>
            <person name="Kawai J."/>
            <person name="Hayashizaki Y."/>
        </authorList>
    </citation>
    <scope>NUCLEOTIDE SEQUENCE [LARGE SCALE MRNA] (ISOFORMS 1 AND 2)</scope>
    <source>
        <strain>C57BL/6J</strain>
        <tissue>Eye</tissue>
        <tissue>Liver</tissue>
        <tissue>Medulla oblongata</tissue>
    </source>
</reference>
<reference key="4">
    <citation type="journal article" date="2004" name="DNA Res.">
        <title>Prediction of the coding sequences of mouse homologues of FLJ genes: the complete nucleotide sequences of 110 mouse FLJ-homologous cDNAs identified by screening of terminal sequences of cDNA clones randomly sampled from size-fractionated libraries.</title>
        <authorList>
            <person name="Okazaki N."/>
            <person name="Kikuno R."/>
            <person name="Ohara R."/>
            <person name="Inamoto S."/>
            <person name="Koseki H."/>
            <person name="Hiraoka S."/>
            <person name="Saga Y."/>
            <person name="Kitamura H."/>
            <person name="Nakagawa T."/>
            <person name="Nagase T."/>
            <person name="Ohara O."/>
            <person name="Koga H."/>
        </authorList>
    </citation>
    <scope>NUCLEOTIDE SEQUENCE [LARGE SCALE MRNA] OF 180-684 (ISOFORM 1)</scope>
    <source>
        <strain>ICR</strain>
        <tissue>Embryonic tail</tissue>
    </source>
</reference>
<reference key="5">
    <citation type="submission" date="2009-01" db="UniProtKB">
        <authorList>
            <person name="Lubec G."/>
            <person name="Sunyer B."/>
            <person name="Chen W.-Q."/>
        </authorList>
    </citation>
    <scope>PROTEIN SEQUENCE OF 362-368</scope>
    <scope>IDENTIFICATION BY MASS SPECTROMETRY</scope>
    <source>
        <strain>OF1</strain>
        <tissue>Hippocampus</tissue>
    </source>
</reference>
<reference key="6">
    <citation type="journal article" date="2007" name="Proc. Natl. Acad. Sci. U.S.A.">
        <title>Large-scale phosphorylation analysis of mouse liver.</title>
        <authorList>
            <person name="Villen J."/>
            <person name="Beausoleil S.A."/>
            <person name="Gerber S.A."/>
            <person name="Gygi S.P."/>
        </authorList>
    </citation>
    <scope>PHOSPHORYLATION [LARGE SCALE ANALYSIS] AT SER-510; SER-568 AND SER-572</scope>
    <scope>IDENTIFICATION BY MASS SPECTROMETRY [LARGE SCALE ANALYSIS]</scope>
    <source>
        <tissue>Liver</tissue>
    </source>
</reference>
<reference key="7">
    <citation type="journal article" date="2010" name="Cell">
        <title>A tissue-specific atlas of mouse protein phosphorylation and expression.</title>
        <authorList>
            <person name="Huttlin E.L."/>
            <person name="Jedrychowski M.P."/>
            <person name="Elias J.E."/>
            <person name="Goswami T."/>
            <person name="Rad R."/>
            <person name="Beausoleil S.A."/>
            <person name="Villen J."/>
            <person name="Haas W."/>
            <person name="Sowa M.E."/>
            <person name="Gygi S.P."/>
        </authorList>
    </citation>
    <scope>PHOSPHORYLATION [LARGE SCALE ANALYSIS] AT SER-506; SER-510; SER-553; SER-568; SER-572 AND SER-577</scope>
    <scope>IDENTIFICATION BY MASS SPECTROMETRY [LARGE SCALE ANALYSIS]</scope>
    <source>
        <tissue>Brown adipose tissue</tissue>
        <tissue>Heart</tissue>
        <tissue>Kidney</tissue>
        <tissue>Lung</tissue>
    </source>
</reference>
<sequence>MERTAGKELALAPLQDWGEETEDGAVYSVSLRRQRSQRSTPERSGEGQTPIPATDTFLHYRTSKVRALRAARLERLVHELVSGDREQDPGFVPAFLATHRAFVPTARVLGFLLPPPPPPPPPPAGVDSKRTEGQDLNFSKNLRAVVSVLGSWLRNHPQDFRDPPDHQNLGNVRIFLGWAAPGGAEAREAEKLLEDFLKEAKGEQTEEEKRLAWSGPPRIAQTPGSEFAEDCVEEEGPSSEGPELLDFSVDDVAEQLTLMDVELFLRVRSCECLGSMWSQRDRPGAAGISPTVRATVAQFNTVTGCVLGSVLAAPGLAASQRAQRIEKWIRIAQRCRELRNFSSLRAILSALQSNPIYRLKRSWGAVSREPLSVFRKLSQIFSDEDNHLSSRAILSQEETTEDDDCPSGSLPSKLPPGPVPYLGTFLTDLVMLDTALPDTLKGNLINFEKRRKEWEILARIQQLQQRCQRYSLSPRPPILAALRAQRQLSEEQSYRVSRVIEPPAASCPSSPRIRRRISLTKRLSAKLSREKNSSPGGSPGDPSSPTSSVSPGSPPSSPRNREPPPPGSPPASPGPQSPSTKLSLTMDPPGPWPVTLTPSSSRVPLLGQQTSEARVIRVSINNNHGNLYRSILLTCQDKAPSVVQRALEKHNVPQPWARDYQLFQVLPGDRELLIPDGANVFYAMSPAAPGDFLLRRKEGTGHTLSASPT</sequence>
<feature type="chain" id="PRO_0000306800" description="Ral guanine nucleotide dissociation stimulator-like 3">
    <location>
        <begin position="1"/>
        <end position="709"/>
    </location>
</feature>
<feature type="domain" description="N-terminal Ras-GEF" evidence="2">
    <location>
        <begin position="64"/>
        <end position="201"/>
    </location>
</feature>
<feature type="domain" description="Ras-GEF" evidence="4">
    <location>
        <begin position="248"/>
        <end position="503"/>
    </location>
</feature>
<feature type="domain" description="Ras-associating" evidence="3">
    <location>
        <begin position="612"/>
        <end position="699"/>
    </location>
</feature>
<feature type="region of interest" description="Disordered" evidence="5">
    <location>
        <begin position="26"/>
        <end position="55"/>
    </location>
</feature>
<feature type="region of interest" description="Disordered" evidence="5">
    <location>
        <begin position="203"/>
        <end position="225"/>
    </location>
</feature>
<feature type="region of interest" description="Disordered" evidence="5">
    <location>
        <begin position="395"/>
        <end position="416"/>
    </location>
</feature>
<feature type="region of interest" description="Disordered" evidence="5">
    <location>
        <begin position="502"/>
        <end position="604"/>
    </location>
</feature>
<feature type="region of interest" description="Interaction with HRAS, MRAS and RIT1" evidence="6 7">
    <location>
        <begin position="611"/>
        <end position="706"/>
    </location>
</feature>
<feature type="compositionally biased region" description="Low complexity" evidence="5">
    <location>
        <begin position="502"/>
        <end position="511"/>
    </location>
</feature>
<feature type="compositionally biased region" description="Low complexity" evidence="5">
    <location>
        <begin position="533"/>
        <end position="551"/>
    </location>
</feature>
<feature type="compositionally biased region" description="Pro residues" evidence="5">
    <location>
        <begin position="552"/>
        <end position="576"/>
    </location>
</feature>
<feature type="modified residue" description="Phosphoserine" evidence="11">
    <location>
        <position position="506"/>
    </location>
</feature>
<feature type="modified residue" description="Phosphoserine" evidence="10 11">
    <location>
        <position position="510"/>
    </location>
</feature>
<feature type="modified residue" description="Phosphoserine" evidence="11">
    <location>
        <position position="553"/>
    </location>
</feature>
<feature type="modified residue" description="Phosphoserine" evidence="10 11">
    <location>
        <position position="568"/>
    </location>
</feature>
<feature type="modified residue" description="Phosphoserine" evidence="10 11">
    <location>
        <position position="572"/>
    </location>
</feature>
<feature type="modified residue" description="Phosphoserine" evidence="11">
    <location>
        <position position="577"/>
    </location>
</feature>
<feature type="modified residue" description="Phosphoserine" evidence="1">
    <location>
        <position position="600"/>
    </location>
</feature>
<feature type="splice variant" id="VSP_028471" description="In isoform 2." evidence="8">
    <location>
        <begin position="1"/>
        <end position="99"/>
    </location>
</feature>
<feature type="splice variant" id="VSP_028472" description="In isoform 2." evidence="8">
    <original>RAFVPTARVLGFLLPPPPPPPPPPAG</original>
    <variation>MAPCTASPCGGSAASARPQRGLEKAR</variation>
    <location>
        <begin position="100"/>
        <end position="125"/>
    </location>
</feature>
<feature type="splice variant" id="VSP_028473" description="In isoform 2." evidence="8">
    <original>G</original>
    <variation>V</variation>
    <location>
        <position position="442"/>
    </location>
</feature>
<feature type="splice variant" id="VSP_028474" description="In isoform 2." evidence="8">
    <location>
        <begin position="443"/>
        <end position="709"/>
    </location>
</feature>
<feature type="sequence conflict" description="In Ref. 1; AAF78208." evidence="9" ref="1">
    <original>A</original>
    <variation>V</variation>
    <location>
        <position position="179"/>
    </location>
</feature>
<feature type="sequence conflict" description="In Ref. 3; BAB23634." evidence="9" ref="3">
    <original>R</original>
    <variation>K</variation>
    <location>
        <position position="321"/>
    </location>
</feature>
<feature type="sequence conflict" description="In Ref. 3; BAE22227." evidence="9" ref="3">
    <original>I</original>
    <variation>N</variation>
    <location>
        <position position="478"/>
    </location>
</feature>
<feature type="sequence conflict" description="In Ref. 3; BAC35425." evidence="9" ref="3">
    <original>A</original>
    <variation>T</variation>
    <location>
        <position position="613"/>
    </location>
</feature>
<feature type="sequence conflict" description="In Ref. 3; BAC35425." evidence="9" ref="3">
    <original>N</original>
    <variation>K</variation>
    <location>
        <position position="626"/>
    </location>
</feature>
<gene>
    <name type="primary">Rgl3</name>
</gene>
<comment type="function">
    <text evidence="6 7">Guanine nucleotide exchange factor (GEF) for Ral-A. Potential effector of GTPase HRas and Ras-related protein M-Ras. Negatively regulates Elk-1-dependent gene induction downstream of HRas and MEKK1.</text>
</comment>
<comment type="subunit">
    <text evidence="6 7">Interacts with GTP-bound forms of RIT1, HRAS and MRAS.</text>
</comment>
<comment type="alternative products">
    <event type="alternative splicing"/>
    <isoform>
        <id>Q3UYI5-1</id>
        <name>1</name>
        <sequence type="displayed"/>
    </isoform>
    <isoform>
        <id>Q3UYI5-2</id>
        <name>2</name>
        <sequence type="described" ref="VSP_028471 VSP_028472 VSP_028473 VSP_028474"/>
    </isoform>
</comment>
<comment type="tissue specificity">
    <text evidence="6 7">Widely expressed. Expressed at high levels in the liver and kidney.</text>
</comment>
<comment type="domain">
    <text evidence="6">The Ras-associating domain plays a central role in the activation of Ral-A GDP/GTP exchange activity.</text>
</comment>
<comment type="sequence caution" evidence="9">
    <conflict type="frameshift">
        <sequence resource="EMBL-CDS" id="BAC35425"/>
    </conflict>
</comment>
<evidence type="ECO:0000250" key="1">
    <source>
        <dbReference type="UniProtKB" id="Q3MIN7"/>
    </source>
</evidence>
<evidence type="ECO:0000255" key="2">
    <source>
        <dbReference type="PROSITE-ProRule" id="PRU00135"/>
    </source>
</evidence>
<evidence type="ECO:0000255" key="3">
    <source>
        <dbReference type="PROSITE-ProRule" id="PRU00166"/>
    </source>
</evidence>
<evidence type="ECO:0000255" key="4">
    <source>
        <dbReference type="PROSITE-ProRule" id="PRU00168"/>
    </source>
</evidence>
<evidence type="ECO:0000256" key="5">
    <source>
        <dbReference type="SAM" id="MobiDB-lite"/>
    </source>
</evidence>
<evidence type="ECO:0000269" key="6">
    <source>
    </source>
</evidence>
<evidence type="ECO:0000269" key="7">
    <source>
    </source>
</evidence>
<evidence type="ECO:0000303" key="8">
    <source>
    </source>
</evidence>
<evidence type="ECO:0000305" key="9"/>
<evidence type="ECO:0007744" key="10">
    <source>
    </source>
</evidence>
<evidence type="ECO:0007744" key="11">
    <source>
    </source>
</evidence>
<name>RGL3_MOUSE</name>
<dbReference type="EMBL" id="AF237669">
    <property type="protein sequence ID" value="AAF78208.1"/>
    <property type="molecule type" value="mRNA"/>
</dbReference>
<dbReference type="EMBL" id="AF239661">
    <property type="protein sequence ID" value="AAK91126.1"/>
    <property type="molecule type" value="mRNA"/>
</dbReference>
<dbReference type="EMBL" id="AK004876">
    <property type="protein sequence ID" value="BAB23634.1"/>
    <property type="molecule type" value="mRNA"/>
</dbReference>
<dbReference type="EMBL" id="AK053550">
    <property type="protein sequence ID" value="BAC35425.1"/>
    <property type="status" value="ALT_FRAME"/>
    <property type="molecule type" value="mRNA"/>
</dbReference>
<dbReference type="EMBL" id="AK134654">
    <property type="protein sequence ID" value="BAE22227.1"/>
    <property type="molecule type" value="mRNA"/>
</dbReference>
<dbReference type="EMBL" id="AK131140">
    <property type="protein sequence ID" value="BAD21390.1"/>
    <property type="molecule type" value="Transcribed_RNA"/>
</dbReference>
<dbReference type="CCDS" id="CCDS22916.1">
    <molecule id="Q3UYI5-1"/>
</dbReference>
<dbReference type="RefSeq" id="NP_076111.2">
    <molecule id="Q3UYI5-1"/>
    <property type="nucleotide sequence ID" value="NM_023622.4"/>
</dbReference>
<dbReference type="SMR" id="Q3UYI5"/>
<dbReference type="BioGRID" id="214896">
    <property type="interactions" value="4"/>
</dbReference>
<dbReference type="FunCoup" id="Q3UYI5">
    <property type="interactions" value="149"/>
</dbReference>
<dbReference type="STRING" id="10090.ENSMUSP00000035726"/>
<dbReference type="iPTMnet" id="Q3UYI5"/>
<dbReference type="PhosphoSitePlus" id="Q3UYI5"/>
<dbReference type="PaxDb" id="10090-ENSMUSP00000035726"/>
<dbReference type="PeptideAtlas" id="Q3UYI5"/>
<dbReference type="ProteomicsDB" id="255320">
    <molecule id="Q3UYI5-1"/>
</dbReference>
<dbReference type="ProteomicsDB" id="255321">
    <molecule id="Q3UYI5-2"/>
</dbReference>
<dbReference type="Pumba" id="Q3UYI5"/>
<dbReference type="Antibodypedia" id="52109">
    <property type="antibodies" value="33 antibodies from 12 providers"/>
</dbReference>
<dbReference type="DNASU" id="71746"/>
<dbReference type="Ensembl" id="ENSMUST00000045726.8">
    <molecule id="Q3UYI5-1"/>
    <property type="protein sequence ID" value="ENSMUSP00000035726.7"/>
    <property type="gene ID" value="ENSMUSG00000040146.10"/>
</dbReference>
<dbReference type="Ensembl" id="ENSMUST00000214026.2">
    <molecule id="Q3UYI5-1"/>
    <property type="protein sequence ID" value="ENSMUSP00000148965.2"/>
    <property type="gene ID" value="ENSMUSG00000040146.10"/>
</dbReference>
<dbReference type="GeneID" id="71746"/>
<dbReference type="KEGG" id="mmu:71746"/>
<dbReference type="UCSC" id="uc009onf.1">
    <molecule id="Q3UYI5-1"/>
    <property type="organism name" value="mouse"/>
</dbReference>
<dbReference type="AGR" id="MGI:1918996"/>
<dbReference type="CTD" id="57139"/>
<dbReference type="MGI" id="MGI:1918996">
    <property type="gene designation" value="Rgl3"/>
</dbReference>
<dbReference type="VEuPathDB" id="HostDB:ENSMUSG00000040146"/>
<dbReference type="eggNOG" id="KOG3629">
    <property type="taxonomic scope" value="Eukaryota"/>
</dbReference>
<dbReference type="GeneTree" id="ENSGT00940000161935"/>
<dbReference type="HOGENOM" id="CLU_010252_1_1_1"/>
<dbReference type="InParanoid" id="Q3UYI5"/>
<dbReference type="OMA" id="YISCMIE"/>
<dbReference type="OrthoDB" id="26687at2759"/>
<dbReference type="PhylomeDB" id="Q3UYI5"/>
<dbReference type="TreeFam" id="TF315204"/>
<dbReference type="Reactome" id="R-MMU-5673001">
    <property type="pathway name" value="RAF/MAP kinase cascade"/>
</dbReference>
<dbReference type="BioGRID-ORCS" id="71746">
    <property type="hits" value="3 hits in 75 CRISPR screens"/>
</dbReference>
<dbReference type="PRO" id="PR:Q3UYI5"/>
<dbReference type="Proteomes" id="UP000000589">
    <property type="component" value="Chromosome 9"/>
</dbReference>
<dbReference type="RNAct" id="Q3UYI5">
    <property type="molecule type" value="protein"/>
</dbReference>
<dbReference type="Bgee" id="ENSMUSG00000040146">
    <property type="expression patterns" value="Expressed in cerebellar cortex and 120 other cell types or tissues"/>
</dbReference>
<dbReference type="ExpressionAtlas" id="Q3UYI5">
    <property type="expression patterns" value="baseline and differential"/>
</dbReference>
<dbReference type="GO" id="GO:0005085">
    <property type="term" value="F:guanyl-nucleotide exchange factor activity"/>
    <property type="evidence" value="ECO:0000314"/>
    <property type="project" value="MGI"/>
</dbReference>
<dbReference type="GO" id="GO:0031267">
    <property type="term" value="F:small GTPase binding"/>
    <property type="evidence" value="ECO:0000314"/>
    <property type="project" value="MGI"/>
</dbReference>
<dbReference type="GO" id="GO:0007264">
    <property type="term" value="P:small GTPase-mediated signal transduction"/>
    <property type="evidence" value="ECO:0000304"/>
    <property type="project" value="MGI"/>
</dbReference>
<dbReference type="CDD" id="cd17212">
    <property type="entry name" value="RA_RGL3"/>
    <property type="match status" value="1"/>
</dbReference>
<dbReference type="CDD" id="cd00155">
    <property type="entry name" value="RasGEF"/>
    <property type="match status" value="1"/>
</dbReference>
<dbReference type="CDD" id="cd06224">
    <property type="entry name" value="REM"/>
    <property type="match status" value="1"/>
</dbReference>
<dbReference type="Gene3D" id="3.10.20.90">
    <property type="entry name" value="Phosphatidylinositol 3-kinase Catalytic Subunit, Chain A, domain 1"/>
    <property type="match status" value="1"/>
</dbReference>
<dbReference type="Gene3D" id="1.10.840.10">
    <property type="entry name" value="Ras guanine-nucleotide exchange factors catalytic domain"/>
    <property type="match status" value="1"/>
</dbReference>
<dbReference type="Gene3D" id="1.20.870.10">
    <property type="entry name" value="Son of sevenless (SoS) protein Chain: S domain 1"/>
    <property type="match status" value="1"/>
</dbReference>
<dbReference type="InterPro" id="IPR000159">
    <property type="entry name" value="RA_dom"/>
</dbReference>
<dbReference type="InterPro" id="IPR008937">
    <property type="entry name" value="Ras-like_GEF"/>
</dbReference>
<dbReference type="InterPro" id="IPR000651">
    <property type="entry name" value="Ras-like_Gua-exchang_fac_N"/>
</dbReference>
<dbReference type="InterPro" id="IPR019804">
    <property type="entry name" value="Ras_G-nucl-exch_fac_CS"/>
</dbReference>
<dbReference type="InterPro" id="IPR023578">
    <property type="entry name" value="Ras_GEF_dom_sf"/>
</dbReference>
<dbReference type="InterPro" id="IPR001895">
    <property type="entry name" value="RASGEF_cat_dom"/>
</dbReference>
<dbReference type="InterPro" id="IPR036964">
    <property type="entry name" value="RASGEF_cat_dom_sf"/>
</dbReference>
<dbReference type="InterPro" id="IPR030750">
    <property type="entry name" value="RGL3_RA"/>
</dbReference>
<dbReference type="InterPro" id="IPR029071">
    <property type="entry name" value="Ubiquitin-like_domsf"/>
</dbReference>
<dbReference type="PANTHER" id="PTHR23113">
    <property type="entry name" value="GUANINE NUCLEOTIDE EXCHANGE FACTOR"/>
    <property type="match status" value="1"/>
</dbReference>
<dbReference type="PANTHER" id="PTHR23113:SF220">
    <property type="entry name" value="RAL GUANINE NUCLEOTIDE DISSOCIATION STIMULATOR-LIKE 3"/>
    <property type="match status" value="1"/>
</dbReference>
<dbReference type="Pfam" id="PF00788">
    <property type="entry name" value="RA"/>
    <property type="match status" value="1"/>
</dbReference>
<dbReference type="Pfam" id="PF00617">
    <property type="entry name" value="RasGEF"/>
    <property type="match status" value="1"/>
</dbReference>
<dbReference type="Pfam" id="PF00618">
    <property type="entry name" value="RasGEF_N"/>
    <property type="match status" value="1"/>
</dbReference>
<dbReference type="SMART" id="SM00314">
    <property type="entry name" value="RA"/>
    <property type="match status" value="1"/>
</dbReference>
<dbReference type="SMART" id="SM00147">
    <property type="entry name" value="RasGEF"/>
    <property type="match status" value="1"/>
</dbReference>
<dbReference type="SMART" id="SM00229">
    <property type="entry name" value="RasGEFN"/>
    <property type="match status" value="1"/>
</dbReference>
<dbReference type="SUPFAM" id="SSF48366">
    <property type="entry name" value="Ras GEF"/>
    <property type="match status" value="1"/>
</dbReference>
<dbReference type="SUPFAM" id="SSF54236">
    <property type="entry name" value="Ubiquitin-like"/>
    <property type="match status" value="1"/>
</dbReference>
<dbReference type="PROSITE" id="PS50200">
    <property type="entry name" value="RA"/>
    <property type="match status" value="1"/>
</dbReference>
<dbReference type="PROSITE" id="PS00720">
    <property type="entry name" value="RASGEF"/>
    <property type="match status" value="1"/>
</dbReference>
<dbReference type="PROSITE" id="PS50009">
    <property type="entry name" value="RASGEF_CAT"/>
    <property type="match status" value="1"/>
</dbReference>
<dbReference type="PROSITE" id="PS50212">
    <property type="entry name" value="RASGEF_NTER"/>
    <property type="match status" value="1"/>
</dbReference>
<protein>
    <recommendedName>
        <fullName>Ral guanine nucleotide dissociation stimulator-like 3</fullName>
        <shortName>RalGDS-like 3</shortName>
    </recommendedName>
    <alternativeName>
        <fullName>RalGDS-related effector protein of M-Ras</fullName>
    </alternativeName>
    <alternativeName>
        <fullName>Ras pathway modulator</fullName>
        <shortName>RPM</shortName>
    </alternativeName>
</protein>
<keyword id="KW-0025">Alternative splicing</keyword>
<keyword id="KW-0903">Direct protein sequencing</keyword>
<keyword id="KW-0344">Guanine-nucleotide releasing factor</keyword>
<keyword id="KW-0597">Phosphoprotein</keyword>
<keyword id="KW-1185">Reference proteome</keyword>
<accession>Q3UYI5</accession>
<accession>Q6KAR7</accession>
<accession>Q8BKD3</accession>
<accession>Q924M8</accession>
<accession>Q9DBL8</accession>
<accession>Q9JID4</accession>
<organism>
    <name type="scientific">Mus musculus</name>
    <name type="common">Mouse</name>
    <dbReference type="NCBI Taxonomy" id="10090"/>
    <lineage>
        <taxon>Eukaryota</taxon>
        <taxon>Metazoa</taxon>
        <taxon>Chordata</taxon>
        <taxon>Craniata</taxon>
        <taxon>Vertebrata</taxon>
        <taxon>Euteleostomi</taxon>
        <taxon>Mammalia</taxon>
        <taxon>Eutheria</taxon>
        <taxon>Euarchontoglires</taxon>
        <taxon>Glires</taxon>
        <taxon>Rodentia</taxon>
        <taxon>Myomorpha</taxon>
        <taxon>Muroidea</taxon>
        <taxon>Muridae</taxon>
        <taxon>Murinae</taxon>
        <taxon>Mus</taxon>
        <taxon>Mus</taxon>
    </lineage>
</organism>
<proteinExistence type="evidence at protein level"/>